<evidence type="ECO:0000250" key="1"/>
<evidence type="ECO:0000255" key="2">
    <source>
        <dbReference type="PROSITE-ProRule" id="PRU00180"/>
    </source>
</evidence>
<evidence type="ECO:0000256" key="3">
    <source>
        <dbReference type="SAM" id="MobiDB-lite"/>
    </source>
</evidence>
<evidence type="ECO:0000269" key="4">
    <source>
    </source>
</evidence>
<evidence type="ECO:0000305" key="5"/>
<feature type="chain" id="PRO_0000418150" description="Small ribosomal subunit protein bS1">
    <location>
        <begin position="1"/>
        <end position="400"/>
    </location>
</feature>
<feature type="domain" description="S1 motif 1" evidence="2">
    <location>
        <begin position="17"/>
        <end position="87"/>
    </location>
</feature>
<feature type="domain" description="S1 motif 2" evidence="2">
    <location>
        <begin position="107"/>
        <end position="173"/>
    </location>
</feature>
<feature type="domain" description="S1 motif 3" evidence="2">
    <location>
        <begin position="194"/>
        <end position="262"/>
    </location>
</feature>
<feature type="domain" description="S1 motif 4" evidence="2">
    <location>
        <begin position="279"/>
        <end position="348"/>
    </location>
</feature>
<feature type="region of interest" description="Disordered" evidence="3">
    <location>
        <begin position="351"/>
        <end position="400"/>
    </location>
</feature>
<feature type="compositionally biased region" description="Basic and acidic residues" evidence="3">
    <location>
        <begin position="351"/>
        <end position="366"/>
    </location>
</feature>
<proteinExistence type="evidence at protein level"/>
<accession>Q8CWR9</accession>
<name>RS1_STRR6</name>
<organism>
    <name type="scientific">Streptococcus pneumoniae (strain ATCC BAA-255 / R6)</name>
    <dbReference type="NCBI Taxonomy" id="171101"/>
    <lineage>
        <taxon>Bacteria</taxon>
        <taxon>Bacillati</taxon>
        <taxon>Bacillota</taxon>
        <taxon>Bacilli</taxon>
        <taxon>Lactobacillales</taxon>
        <taxon>Streptococcaceae</taxon>
        <taxon>Streptococcus</taxon>
    </lineage>
</organism>
<dbReference type="EMBL" id="AE007317">
    <property type="protein sequence ID" value="AAK99568.1"/>
    <property type="molecule type" value="Genomic_DNA"/>
</dbReference>
<dbReference type="PIR" id="D97967">
    <property type="entry name" value="D97967"/>
</dbReference>
<dbReference type="RefSeq" id="NP_358358.1">
    <property type="nucleotide sequence ID" value="NC_003098.1"/>
</dbReference>
<dbReference type="RefSeq" id="WP_001001623.1">
    <property type="nucleotide sequence ID" value="NC_003098.1"/>
</dbReference>
<dbReference type="SMR" id="Q8CWR9"/>
<dbReference type="STRING" id="171101.spr0764"/>
<dbReference type="GeneID" id="45653782"/>
<dbReference type="KEGG" id="spr:spr0764"/>
<dbReference type="PATRIC" id="fig|171101.6.peg.846"/>
<dbReference type="eggNOG" id="COG0539">
    <property type="taxonomic scope" value="Bacteria"/>
</dbReference>
<dbReference type="HOGENOM" id="CLU_015805_4_5_9"/>
<dbReference type="PRO" id="PR:Q8CWR9"/>
<dbReference type="Proteomes" id="UP000000586">
    <property type="component" value="Chromosome"/>
</dbReference>
<dbReference type="GO" id="GO:0022627">
    <property type="term" value="C:cytosolic small ribosomal subunit"/>
    <property type="evidence" value="ECO:0000318"/>
    <property type="project" value="GO_Central"/>
</dbReference>
<dbReference type="GO" id="GO:0003729">
    <property type="term" value="F:mRNA binding"/>
    <property type="evidence" value="ECO:0000318"/>
    <property type="project" value="GO_Central"/>
</dbReference>
<dbReference type="GO" id="GO:0003735">
    <property type="term" value="F:structural constituent of ribosome"/>
    <property type="evidence" value="ECO:0000318"/>
    <property type="project" value="GO_Central"/>
</dbReference>
<dbReference type="GO" id="GO:0006412">
    <property type="term" value="P:translation"/>
    <property type="evidence" value="ECO:0000318"/>
    <property type="project" value="GO_Central"/>
</dbReference>
<dbReference type="CDD" id="cd04465">
    <property type="entry name" value="S1_RPS1_repeat_ec2_hs2"/>
    <property type="match status" value="1"/>
</dbReference>
<dbReference type="CDD" id="cd05688">
    <property type="entry name" value="S1_RPS1_repeat_ec3"/>
    <property type="match status" value="1"/>
</dbReference>
<dbReference type="FunFam" id="2.40.50.140:FF:000114">
    <property type="entry name" value="30S ribosomal protein S1"/>
    <property type="match status" value="1"/>
</dbReference>
<dbReference type="FunFam" id="2.40.50.140:FF:000190">
    <property type="entry name" value="30S ribosomal protein S1"/>
    <property type="match status" value="1"/>
</dbReference>
<dbReference type="FunFam" id="2.40.50.140:FF:000214">
    <property type="entry name" value="30S ribosomal protein S1"/>
    <property type="match status" value="1"/>
</dbReference>
<dbReference type="Gene3D" id="2.40.50.140">
    <property type="entry name" value="Nucleic acid-binding proteins"/>
    <property type="match status" value="4"/>
</dbReference>
<dbReference type="InterPro" id="IPR012340">
    <property type="entry name" value="NA-bd_OB-fold"/>
</dbReference>
<dbReference type="InterPro" id="IPR050437">
    <property type="entry name" value="Ribos_protein_bS1-like"/>
</dbReference>
<dbReference type="InterPro" id="IPR035104">
    <property type="entry name" value="Ribosomal_protein_S1-like"/>
</dbReference>
<dbReference type="InterPro" id="IPR003029">
    <property type="entry name" value="S1_domain"/>
</dbReference>
<dbReference type="NCBIfam" id="NF005208">
    <property type="entry name" value="PRK06676.1"/>
    <property type="match status" value="1"/>
</dbReference>
<dbReference type="PANTHER" id="PTHR10724">
    <property type="entry name" value="30S RIBOSOMAL PROTEIN S1"/>
    <property type="match status" value="1"/>
</dbReference>
<dbReference type="PANTHER" id="PTHR10724:SF7">
    <property type="entry name" value="SMALL RIBOSOMAL SUBUNIT PROTEIN BS1C"/>
    <property type="match status" value="1"/>
</dbReference>
<dbReference type="Pfam" id="PF00575">
    <property type="entry name" value="S1"/>
    <property type="match status" value="4"/>
</dbReference>
<dbReference type="PRINTS" id="PR00681">
    <property type="entry name" value="RIBOSOMALS1"/>
</dbReference>
<dbReference type="SMART" id="SM00316">
    <property type="entry name" value="S1"/>
    <property type="match status" value="4"/>
</dbReference>
<dbReference type="SUPFAM" id="SSF50249">
    <property type="entry name" value="Nucleic acid-binding proteins"/>
    <property type="match status" value="4"/>
</dbReference>
<dbReference type="PROSITE" id="PS50126">
    <property type="entry name" value="S1"/>
    <property type="match status" value="4"/>
</dbReference>
<sequence length="400" mass="43896">MNEFEDLLNSVSQVETGDVVSAEVLTVDATQANVAISGTGVEGVLTLRELTNDRDADINDFVKVGEVLDVLVLRQVVGKDTDTVTYLVSKKRLEARKAWDKLVGREEEVVTVKGTRAVKGGLSVEFEGVRGFIPASMLDTRFVRNAERFVGQEFDTKIKEVNAKENRFILSRREVVEAATAAARAEVFGKLAVGDVVTGKVARITSFGAFIDLGGVDGLVHLTELSHERNVSPKSVVTVGEEIEVKILDLNEEEGRVSLSLKATVPGPWDGVEQKLAKGDVVEGTVKRLTDFGAFVEVLPGIDGLVHVSQISHKRIENPKEALKVGQEVQVKVLEVNADAERVSLSIKALEERPAQEEGQKEEKRAARPRRPRRQEKRDFELPETQTGFSMADLFGDIEL</sequence>
<keyword id="KW-0597">Phosphoprotein</keyword>
<keyword id="KW-1185">Reference proteome</keyword>
<keyword id="KW-0677">Repeat</keyword>
<keyword id="KW-0687">Ribonucleoprotein</keyword>
<keyword id="KW-0689">Ribosomal protein</keyword>
<keyword id="KW-0694">RNA-binding</keyword>
<reference key="1">
    <citation type="journal article" date="2001" name="J. Bacteriol.">
        <title>Genome of the bacterium Streptococcus pneumoniae strain R6.</title>
        <authorList>
            <person name="Hoskins J."/>
            <person name="Alborn W.E. Jr."/>
            <person name="Arnold J."/>
            <person name="Blaszczak L.C."/>
            <person name="Burgett S."/>
            <person name="DeHoff B.S."/>
            <person name="Estrem S.T."/>
            <person name="Fritz L."/>
            <person name="Fu D.-J."/>
            <person name="Fuller W."/>
            <person name="Geringer C."/>
            <person name="Gilmour R."/>
            <person name="Glass J.S."/>
            <person name="Khoja H."/>
            <person name="Kraft A.R."/>
            <person name="Lagace R.E."/>
            <person name="LeBlanc D.J."/>
            <person name="Lee L.N."/>
            <person name="Lefkowitz E.J."/>
            <person name="Lu J."/>
            <person name="Matsushima P."/>
            <person name="McAhren S.M."/>
            <person name="McHenney M."/>
            <person name="McLeaster K."/>
            <person name="Mundy C.W."/>
            <person name="Nicas T.I."/>
            <person name="Norris F.H."/>
            <person name="O'Gara M."/>
            <person name="Peery R.B."/>
            <person name="Robertson G.T."/>
            <person name="Rockey P."/>
            <person name="Sun P.-M."/>
            <person name="Winkler M.E."/>
            <person name="Yang Y."/>
            <person name="Young-Bellido M."/>
            <person name="Zhao G."/>
            <person name="Zook C.A."/>
            <person name="Baltz R.H."/>
            <person name="Jaskunas S.R."/>
            <person name="Rosteck P.R. Jr."/>
            <person name="Skatrud P.L."/>
            <person name="Glass J.I."/>
        </authorList>
    </citation>
    <scope>NUCLEOTIDE SEQUENCE [LARGE SCALE GENOMIC DNA]</scope>
    <source>
        <strain>ATCC BAA-255 / R6</strain>
    </source>
</reference>
<reference key="2">
    <citation type="journal article" date="2005" name="FEBS J.">
        <title>Characterization of a eukaryotic type serine/threonine protein kinase and protein phosphatase of Streptococcus pneumoniae and identification of kinase substrates.</title>
        <authorList>
            <person name="Novakova L."/>
            <person name="Saskova L."/>
            <person name="Pallova P."/>
            <person name="Janecek J."/>
            <person name="Novotna J."/>
            <person name="Ulrych A."/>
            <person name="Echenique J."/>
            <person name="Trombe M.C."/>
            <person name="Branny P."/>
        </authorList>
    </citation>
    <scope>PHOSPHORYLATION</scope>
    <scope>IDENTIFICATION BY MASS SPECTROMETRY</scope>
</reference>
<protein>
    <recommendedName>
        <fullName evidence="5">Small ribosomal subunit protein bS1</fullName>
    </recommendedName>
    <alternativeName>
        <fullName>30S Ribosomal protein S1</fullName>
    </alternativeName>
</protein>
<comment type="function">
    <text evidence="1">Binds mRNA; thus facilitating recognition of the initiation point. It is needed to translate mRNA with a short Shine-Dalgarno (SD) purine-rich sequence (By similarity).</text>
</comment>
<comment type="PTM">
    <text evidence="4">Phosphorylated.</text>
</comment>
<comment type="similarity">
    <text evidence="5">Belongs to the bacterial ribosomal protein bS1 family.</text>
</comment>
<gene>
    <name type="primary">rpsA</name>
    <name type="ordered locus">spr0764</name>
</gene>